<protein>
    <recommendedName>
        <fullName evidence="1">Sec-independent protein translocase protein TatA</fullName>
    </recommendedName>
</protein>
<name>TATA_STRGG</name>
<gene>
    <name evidence="1" type="primary">tatA</name>
    <name type="ordered locus">SGR_5870</name>
</gene>
<evidence type="ECO:0000255" key="1">
    <source>
        <dbReference type="HAMAP-Rule" id="MF_00236"/>
    </source>
</evidence>
<evidence type="ECO:0000256" key="2">
    <source>
        <dbReference type="SAM" id="MobiDB-lite"/>
    </source>
</evidence>
<sequence length="99" mass="10328">MIGNLKPLEIVLIIAVILLLFGAKKLPDMARSLGKSARILKSEAKAMKKDDAATAAPTTETVADDTVPPQSTTARTIQAAPGDVTSSRPVSEAKPTTQS</sequence>
<organism>
    <name type="scientific">Streptomyces griseus subsp. griseus (strain JCM 4626 / CBS 651.72 / NBRC 13350 / KCC S-0626 / ISP 5235)</name>
    <dbReference type="NCBI Taxonomy" id="455632"/>
    <lineage>
        <taxon>Bacteria</taxon>
        <taxon>Bacillati</taxon>
        <taxon>Actinomycetota</taxon>
        <taxon>Actinomycetes</taxon>
        <taxon>Kitasatosporales</taxon>
        <taxon>Streptomycetaceae</taxon>
        <taxon>Streptomyces</taxon>
    </lineage>
</organism>
<comment type="function">
    <text evidence="1">Part of the twin-arginine translocation (Tat) system that transports large folded proteins containing a characteristic twin-arginine motif in their signal peptide across membranes. TatA could form the protein-conducting channel of the Tat system.</text>
</comment>
<comment type="subunit">
    <text evidence="1">The Tat system comprises two distinct complexes: a TatABC complex, containing multiple copies of TatA, TatB and TatC subunits, and a separate TatA complex, containing only TatA subunits. Substrates initially bind to the TatABC complex, which probably triggers association of the separate TatA complex to form the active translocon.</text>
</comment>
<comment type="subcellular location">
    <subcellularLocation>
        <location evidence="1">Cell membrane</location>
        <topology evidence="1">Single-pass membrane protein</topology>
    </subcellularLocation>
</comment>
<comment type="similarity">
    <text evidence="1">Belongs to the TatA/E family.</text>
</comment>
<proteinExistence type="inferred from homology"/>
<feature type="chain" id="PRO_1000197910" description="Sec-independent protein translocase protein TatA">
    <location>
        <begin position="1"/>
        <end position="99"/>
    </location>
</feature>
<feature type="transmembrane region" description="Helical" evidence="1">
    <location>
        <begin position="1"/>
        <end position="21"/>
    </location>
</feature>
<feature type="region of interest" description="Disordered" evidence="2">
    <location>
        <begin position="46"/>
        <end position="99"/>
    </location>
</feature>
<feature type="compositionally biased region" description="Low complexity" evidence="2">
    <location>
        <begin position="53"/>
        <end position="69"/>
    </location>
</feature>
<feature type="compositionally biased region" description="Polar residues" evidence="2">
    <location>
        <begin position="84"/>
        <end position="99"/>
    </location>
</feature>
<accession>B1W317</accession>
<dbReference type="EMBL" id="AP009493">
    <property type="protein sequence ID" value="BAG22699.1"/>
    <property type="molecule type" value="Genomic_DNA"/>
</dbReference>
<dbReference type="RefSeq" id="WP_003970178.1">
    <property type="nucleotide sequence ID" value="NC_010572.1"/>
</dbReference>
<dbReference type="SMR" id="B1W317"/>
<dbReference type="KEGG" id="sgr:SGR_5870"/>
<dbReference type="eggNOG" id="COG1826">
    <property type="taxonomic scope" value="Bacteria"/>
</dbReference>
<dbReference type="HOGENOM" id="CLU_086034_4_3_11"/>
<dbReference type="Proteomes" id="UP000001685">
    <property type="component" value="Chromosome"/>
</dbReference>
<dbReference type="GO" id="GO:0033281">
    <property type="term" value="C:TAT protein transport complex"/>
    <property type="evidence" value="ECO:0007669"/>
    <property type="project" value="UniProtKB-UniRule"/>
</dbReference>
<dbReference type="GO" id="GO:0008320">
    <property type="term" value="F:protein transmembrane transporter activity"/>
    <property type="evidence" value="ECO:0007669"/>
    <property type="project" value="UniProtKB-UniRule"/>
</dbReference>
<dbReference type="GO" id="GO:0043953">
    <property type="term" value="P:protein transport by the Tat complex"/>
    <property type="evidence" value="ECO:0007669"/>
    <property type="project" value="UniProtKB-UniRule"/>
</dbReference>
<dbReference type="Gene3D" id="1.20.5.3310">
    <property type="match status" value="1"/>
</dbReference>
<dbReference type="HAMAP" id="MF_00236">
    <property type="entry name" value="TatA_E"/>
    <property type="match status" value="1"/>
</dbReference>
<dbReference type="InterPro" id="IPR003369">
    <property type="entry name" value="TatA/B/E"/>
</dbReference>
<dbReference type="InterPro" id="IPR006312">
    <property type="entry name" value="TatA/E"/>
</dbReference>
<dbReference type="NCBIfam" id="NF001854">
    <property type="entry name" value="PRK00575.1"/>
    <property type="match status" value="1"/>
</dbReference>
<dbReference type="NCBIfam" id="TIGR01411">
    <property type="entry name" value="tatAE"/>
    <property type="match status" value="1"/>
</dbReference>
<dbReference type="PANTHER" id="PTHR42982">
    <property type="entry name" value="SEC-INDEPENDENT PROTEIN TRANSLOCASE PROTEIN TATA"/>
    <property type="match status" value="1"/>
</dbReference>
<dbReference type="PANTHER" id="PTHR42982:SF8">
    <property type="entry name" value="SEC-INDEPENDENT PROTEIN TRANSLOCASE PROTEIN TATA"/>
    <property type="match status" value="1"/>
</dbReference>
<dbReference type="Pfam" id="PF02416">
    <property type="entry name" value="TatA_B_E"/>
    <property type="match status" value="1"/>
</dbReference>
<reference key="1">
    <citation type="journal article" date="2008" name="J. Bacteriol.">
        <title>Genome sequence of the streptomycin-producing microorganism Streptomyces griseus IFO 13350.</title>
        <authorList>
            <person name="Ohnishi Y."/>
            <person name="Ishikawa J."/>
            <person name="Hara H."/>
            <person name="Suzuki H."/>
            <person name="Ikenoya M."/>
            <person name="Ikeda H."/>
            <person name="Yamashita A."/>
            <person name="Hattori M."/>
            <person name="Horinouchi S."/>
        </authorList>
    </citation>
    <scope>NUCLEOTIDE SEQUENCE [LARGE SCALE GENOMIC DNA]</scope>
    <source>
        <strain>JCM 4626 / CBS 651.72 / NBRC 13350 / KCC S-0626 / ISP 5235</strain>
    </source>
</reference>
<keyword id="KW-1003">Cell membrane</keyword>
<keyword id="KW-0472">Membrane</keyword>
<keyword id="KW-0653">Protein transport</keyword>
<keyword id="KW-0811">Translocation</keyword>
<keyword id="KW-0812">Transmembrane</keyword>
<keyword id="KW-1133">Transmembrane helix</keyword>
<keyword id="KW-0813">Transport</keyword>